<gene>
    <name type="primary">rpl22</name>
</gene>
<sequence length="149" mass="17687">MTSFKLVKYIPRIKKKKSGLRKLARKVPTDRLLKFERVFKAQKRIPMSVFKAQRVLDEIRWRYYEETVMILNLMPYRASYPILKLVYSAAANATHYRDFDKANLFITKAEVSRSTIMKKFRPRARGRSFPIKKSMCHITIVLNIVKKSK</sequence>
<evidence type="ECO:0000250" key="1"/>
<evidence type="ECO:0000305" key="2"/>
<organism>
    <name type="scientific">Hordeum vulgare</name>
    <name type="common">Barley</name>
    <dbReference type="NCBI Taxonomy" id="4513"/>
    <lineage>
        <taxon>Eukaryota</taxon>
        <taxon>Viridiplantae</taxon>
        <taxon>Streptophyta</taxon>
        <taxon>Embryophyta</taxon>
        <taxon>Tracheophyta</taxon>
        <taxon>Spermatophyta</taxon>
        <taxon>Magnoliopsida</taxon>
        <taxon>Liliopsida</taxon>
        <taxon>Poales</taxon>
        <taxon>Poaceae</taxon>
        <taxon>BOP clade</taxon>
        <taxon>Pooideae</taxon>
        <taxon>Triticodae</taxon>
        <taxon>Triticeae</taxon>
        <taxon>Hordeinae</taxon>
        <taxon>Hordeum</taxon>
    </lineage>
</organism>
<comment type="function">
    <text evidence="1">This protein binds specifically to 23S rRNA.</text>
</comment>
<comment type="function">
    <text evidence="1">The globular domain of the protein is located near the polypeptide exit tunnel on the outside of the subunit, while an extended beta-hairpin is found that lines the wall of the exit tunnel in the center of the 70S ribosome.</text>
</comment>
<comment type="subunit">
    <text evidence="1">Part of the 50S ribosomal subunit.</text>
</comment>
<comment type="subcellular location">
    <subcellularLocation>
        <location>Plastid</location>
        <location>Chloroplast</location>
    </subcellularLocation>
</comment>
<comment type="similarity">
    <text evidence="2">Belongs to the universal ribosomal protein uL22 family.</text>
</comment>
<accession>A1E9N0</accession>
<feature type="chain" id="PRO_0000354575" description="Large ribosomal subunit protein uL22c">
    <location>
        <begin position="1"/>
        <end position="149"/>
    </location>
</feature>
<protein>
    <recommendedName>
        <fullName evidence="2">Large ribosomal subunit protein uL22c</fullName>
    </recommendedName>
    <alternativeName>
        <fullName>50S ribosomal protein L22, chloroplastic</fullName>
    </alternativeName>
</protein>
<geneLocation type="chloroplast"/>
<name>RK22_HORVU</name>
<dbReference type="EMBL" id="EF115541">
    <property type="protein sequence ID" value="ABK79451.1"/>
    <property type="molecule type" value="Genomic_DNA"/>
</dbReference>
<dbReference type="RefSeq" id="YP_010144464.1">
    <property type="nucleotide sequence ID" value="NC_056985.1"/>
</dbReference>
<dbReference type="RefSeq" id="YP_874692.1">
    <property type="nucleotide sequence ID" value="NC_008590.1"/>
</dbReference>
<dbReference type="SMR" id="A1E9N0"/>
<dbReference type="GeneID" id="4525114"/>
<dbReference type="GeneID" id="67140691"/>
<dbReference type="GO" id="GO:0009507">
    <property type="term" value="C:chloroplast"/>
    <property type="evidence" value="ECO:0007669"/>
    <property type="project" value="UniProtKB-SubCell"/>
</dbReference>
<dbReference type="GO" id="GO:0015934">
    <property type="term" value="C:large ribosomal subunit"/>
    <property type="evidence" value="ECO:0007669"/>
    <property type="project" value="InterPro"/>
</dbReference>
<dbReference type="GO" id="GO:0019843">
    <property type="term" value="F:rRNA binding"/>
    <property type="evidence" value="ECO:0007669"/>
    <property type="project" value="UniProtKB-UniRule"/>
</dbReference>
<dbReference type="GO" id="GO:0003735">
    <property type="term" value="F:structural constituent of ribosome"/>
    <property type="evidence" value="ECO:0007669"/>
    <property type="project" value="InterPro"/>
</dbReference>
<dbReference type="GO" id="GO:0006412">
    <property type="term" value="P:translation"/>
    <property type="evidence" value="ECO:0007669"/>
    <property type="project" value="UniProtKB-UniRule"/>
</dbReference>
<dbReference type="CDD" id="cd00336">
    <property type="entry name" value="Ribosomal_L22"/>
    <property type="match status" value="1"/>
</dbReference>
<dbReference type="FunFam" id="3.90.470.10:FF:000004">
    <property type="entry name" value="50S ribosomal protein L22, chloroplastic"/>
    <property type="match status" value="1"/>
</dbReference>
<dbReference type="Gene3D" id="3.90.470.10">
    <property type="entry name" value="Ribosomal protein L22/L17"/>
    <property type="match status" value="1"/>
</dbReference>
<dbReference type="HAMAP" id="MF_01331_B">
    <property type="entry name" value="Ribosomal_uL22_B"/>
    <property type="match status" value="1"/>
</dbReference>
<dbReference type="InterPro" id="IPR001063">
    <property type="entry name" value="Ribosomal_uL22"/>
</dbReference>
<dbReference type="InterPro" id="IPR005727">
    <property type="entry name" value="Ribosomal_uL22_bac/chlpt-type"/>
</dbReference>
<dbReference type="InterPro" id="IPR047867">
    <property type="entry name" value="Ribosomal_uL22_bac/org-type"/>
</dbReference>
<dbReference type="InterPro" id="IPR018260">
    <property type="entry name" value="Ribosomal_uL22_CS"/>
</dbReference>
<dbReference type="InterPro" id="IPR036394">
    <property type="entry name" value="Ribosomal_uL22_sf"/>
</dbReference>
<dbReference type="NCBIfam" id="TIGR01044">
    <property type="entry name" value="rplV_bact"/>
    <property type="match status" value="1"/>
</dbReference>
<dbReference type="PANTHER" id="PTHR13501">
    <property type="entry name" value="CHLOROPLAST 50S RIBOSOMAL PROTEIN L22-RELATED"/>
    <property type="match status" value="1"/>
</dbReference>
<dbReference type="PANTHER" id="PTHR13501:SF10">
    <property type="entry name" value="LARGE RIBOSOMAL SUBUNIT PROTEIN UL22M"/>
    <property type="match status" value="1"/>
</dbReference>
<dbReference type="Pfam" id="PF00237">
    <property type="entry name" value="Ribosomal_L22"/>
    <property type="match status" value="1"/>
</dbReference>
<dbReference type="SUPFAM" id="SSF54843">
    <property type="entry name" value="Ribosomal protein L22"/>
    <property type="match status" value="1"/>
</dbReference>
<dbReference type="PROSITE" id="PS00464">
    <property type="entry name" value="RIBOSOMAL_L22"/>
    <property type="match status" value="1"/>
</dbReference>
<keyword id="KW-0150">Chloroplast</keyword>
<keyword id="KW-0934">Plastid</keyword>
<keyword id="KW-0687">Ribonucleoprotein</keyword>
<keyword id="KW-0689">Ribosomal protein</keyword>
<keyword id="KW-0694">RNA-binding</keyword>
<keyword id="KW-0699">rRNA-binding</keyword>
<reference key="1">
    <citation type="journal article" date="2007" name="Theor. Appl. Genet.">
        <title>Complete chloroplast genome sequences of Hordeum vulgare, Sorghum bicolor and Agrostis stolonifera, and comparative analyses with other grass genomes.</title>
        <authorList>
            <person name="Saski C."/>
            <person name="Lee S.-B."/>
            <person name="Fjellheim S."/>
            <person name="Guda C."/>
            <person name="Jansen R.K."/>
            <person name="Luo H."/>
            <person name="Tomkins J."/>
            <person name="Rognli O.A."/>
            <person name="Daniell H."/>
            <person name="Clarke J.L."/>
        </authorList>
    </citation>
    <scope>NUCLEOTIDE SEQUENCE [LARGE SCALE GENOMIC DNA]</scope>
    <source>
        <strain>cv. Morex</strain>
    </source>
</reference>
<proteinExistence type="inferred from homology"/>